<keyword id="KW-0342">GTP-binding</keyword>
<keyword id="KW-0396">Initiation factor</keyword>
<keyword id="KW-0547">Nucleotide-binding</keyword>
<keyword id="KW-0648">Protein biosynthesis</keyword>
<keyword id="KW-1185">Reference proteome</keyword>
<sequence>MALQNIGASNRDDAFYRYKMPRMITKIEGRGNGIKTNVVNMVDIAKALARPASYTTKYFGCELGAQSKFDEKTGISLVNGAHDTAKLAGLLEVFIKKYVQCYGCGNPETEILISKTQMISLKCAACGFVSDVDMRDKLTTFILKNPPEQKKGGKDKKAMRRAEKERLKEGEAADEEQKKLKKDAKKKGSKDSTAKGLKKKATTATGSDEDHSSSPTRSHDGDKAAADDDDDDVQWQTDTSIEAAKQRMQEQLSAATAEMVMLSTEETEKKMKQPTHKDGSTNGSAKEIPNDKPAVTKPSPYEELIGDIKASLGSAPTPSQLKAVLASSTLPPQDVMNAPLEALFGGVGKGFTKEVVKNKKYLAVAVPDEGAQTLLVQAIEAFGGKCNPEALKEVPVVLKALYDGDILDEETIVDWYNDAVAAGKDSQVVKNAKPFVEWLQSAESDEEGDDE</sequence>
<proteinExistence type="evidence at transcript level"/>
<feature type="chain" id="PRO_0000212524" description="Eukaryotic translation initiation factor 5">
    <location>
        <begin position="1"/>
        <end position="451"/>
    </location>
</feature>
<feature type="domain" description="W2" evidence="2">
    <location>
        <begin position="290"/>
        <end position="449"/>
    </location>
</feature>
<feature type="region of interest" description="Disordered" evidence="3">
    <location>
        <begin position="143"/>
        <end position="233"/>
    </location>
</feature>
<feature type="region of interest" description="Disordered" evidence="3">
    <location>
        <begin position="263"/>
        <end position="299"/>
    </location>
</feature>
<feature type="compositionally biased region" description="Basic and acidic residues" evidence="3">
    <location>
        <begin position="147"/>
        <end position="178"/>
    </location>
</feature>
<feature type="compositionally biased region" description="Basic residues" evidence="3">
    <location>
        <begin position="179"/>
        <end position="188"/>
    </location>
</feature>
<feature type="compositionally biased region" description="Basic and acidic residues" evidence="3">
    <location>
        <begin position="208"/>
        <end position="226"/>
    </location>
</feature>
<feature type="compositionally biased region" description="Basic and acidic residues" evidence="3">
    <location>
        <begin position="266"/>
        <end position="279"/>
    </location>
</feature>
<feature type="binding site" evidence="1">
    <location>
        <begin position="29"/>
        <end position="36"/>
    </location>
    <ligand>
        <name>GTP</name>
        <dbReference type="ChEBI" id="CHEBI:37565"/>
    </ligand>
</feature>
<feature type="sequence conflict" description="In Ref. 2; CAA10616." evidence="4" ref="2">
    <original>P</original>
    <variation>L</variation>
    <location>
        <position position="339"/>
    </location>
</feature>
<protein>
    <recommendedName>
        <fullName>Eukaryotic translation initiation factor 5</fullName>
        <shortName>eIF-5</shortName>
    </recommendedName>
</protein>
<dbReference type="EMBL" id="X99517">
    <property type="protein sequence ID" value="CAA67868.1"/>
    <property type="molecule type" value="mRNA"/>
</dbReference>
<dbReference type="EMBL" id="AJ132240">
    <property type="protein sequence ID" value="CAA10616.1"/>
    <property type="molecule type" value="Genomic_DNA"/>
</dbReference>
<dbReference type="PIR" id="JC5595">
    <property type="entry name" value="JC5595"/>
</dbReference>
<dbReference type="SMR" id="P55876"/>
<dbReference type="FunCoup" id="P55876">
    <property type="interactions" value="3931"/>
</dbReference>
<dbReference type="STRING" id="4577.P55876"/>
<dbReference type="PaxDb" id="4577-GRMZM2G165917_P02"/>
<dbReference type="MaizeGDB" id="66866"/>
<dbReference type="eggNOG" id="KOG2767">
    <property type="taxonomic scope" value="Eukaryota"/>
</dbReference>
<dbReference type="InParanoid" id="P55876"/>
<dbReference type="Proteomes" id="UP000007305">
    <property type="component" value="Unplaced"/>
</dbReference>
<dbReference type="ExpressionAtlas" id="P55876">
    <property type="expression patterns" value="baseline and differential"/>
</dbReference>
<dbReference type="GO" id="GO:0005829">
    <property type="term" value="C:cytosol"/>
    <property type="evidence" value="ECO:0000318"/>
    <property type="project" value="GO_Central"/>
</dbReference>
<dbReference type="GO" id="GO:0071074">
    <property type="term" value="F:eukaryotic initiation factor eIF2 binding"/>
    <property type="evidence" value="ECO:0000318"/>
    <property type="project" value="GO_Central"/>
</dbReference>
<dbReference type="GO" id="GO:0005092">
    <property type="term" value="F:GDP-dissociation inhibitor activity"/>
    <property type="evidence" value="ECO:0000318"/>
    <property type="project" value="GO_Central"/>
</dbReference>
<dbReference type="GO" id="GO:0005525">
    <property type="term" value="F:GTP binding"/>
    <property type="evidence" value="ECO:0007669"/>
    <property type="project" value="UniProtKB-KW"/>
</dbReference>
<dbReference type="GO" id="GO:0003743">
    <property type="term" value="F:translation initiation factor activity"/>
    <property type="evidence" value="ECO:0000318"/>
    <property type="project" value="GO_Central"/>
</dbReference>
<dbReference type="GO" id="GO:0001732">
    <property type="term" value="P:formation of cytoplasmic translation initiation complex"/>
    <property type="evidence" value="ECO:0000318"/>
    <property type="project" value="GO_Central"/>
</dbReference>
<dbReference type="CDD" id="cd11561">
    <property type="entry name" value="W2_eIF5"/>
    <property type="match status" value="1"/>
</dbReference>
<dbReference type="FunFam" id="1.25.40.180:FF:000046">
    <property type="entry name" value="Eukaryotic translation initiation factor 5"/>
    <property type="match status" value="1"/>
</dbReference>
<dbReference type="FunFam" id="2.20.25.350:FF:000001">
    <property type="entry name" value="Eukaryotic translation initiation factor 5"/>
    <property type="match status" value="1"/>
</dbReference>
<dbReference type="FunFam" id="3.30.30.170:FF:000002">
    <property type="entry name" value="Eukaryotic translation initiation factor 5"/>
    <property type="match status" value="1"/>
</dbReference>
<dbReference type="Gene3D" id="1.25.40.180">
    <property type="match status" value="1"/>
</dbReference>
<dbReference type="Gene3D" id="2.20.25.350">
    <property type="match status" value="1"/>
</dbReference>
<dbReference type="Gene3D" id="3.30.30.170">
    <property type="match status" value="1"/>
</dbReference>
<dbReference type="InterPro" id="IPR016024">
    <property type="entry name" value="ARM-type_fold"/>
</dbReference>
<dbReference type="InterPro" id="IPR045196">
    <property type="entry name" value="IF2/IF5"/>
</dbReference>
<dbReference type="InterPro" id="IPR002735">
    <property type="entry name" value="Transl_init_fac_IF2/IF5_dom"/>
</dbReference>
<dbReference type="InterPro" id="IPR016189">
    <property type="entry name" value="Transl_init_fac_IF2/IF5_N"/>
</dbReference>
<dbReference type="InterPro" id="IPR016190">
    <property type="entry name" value="Transl_init_fac_IF2/IF5_Zn-bd"/>
</dbReference>
<dbReference type="InterPro" id="IPR003307">
    <property type="entry name" value="W2_domain"/>
</dbReference>
<dbReference type="PANTHER" id="PTHR23001">
    <property type="entry name" value="EUKARYOTIC TRANSLATION INITIATION FACTOR"/>
    <property type="match status" value="1"/>
</dbReference>
<dbReference type="PANTHER" id="PTHR23001:SF7">
    <property type="entry name" value="EUKARYOTIC TRANSLATION INITIATION FACTOR 5"/>
    <property type="match status" value="1"/>
</dbReference>
<dbReference type="Pfam" id="PF01873">
    <property type="entry name" value="eIF-5_eIF-2B"/>
    <property type="match status" value="1"/>
</dbReference>
<dbReference type="Pfam" id="PF02020">
    <property type="entry name" value="W2"/>
    <property type="match status" value="1"/>
</dbReference>
<dbReference type="SMART" id="SM00653">
    <property type="entry name" value="eIF2B_5"/>
    <property type="match status" value="1"/>
</dbReference>
<dbReference type="SMART" id="SM00515">
    <property type="entry name" value="eIF5C"/>
    <property type="match status" value="1"/>
</dbReference>
<dbReference type="SUPFAM" id="SSF48371">
    <property type="entry name" value="ARM repeat"/>
    <property type="match status" value="1"/>
</dbReference>
<dbReference type="SUPFAM" id="SSF100966">
    <property type="entry name" value="Translation initiation factor 2 beta, aIF2beta, N-terminal domain"/>
    <property type="match status" value="1"/>
</dbReference>
<dbReference type="SUPFAM" id="SSF75689">
    <property type="entry name" value="Zinc-binding domain of translation initiation factor 2 beta"/>
    <property type="match status" value="1"/>
</dbReference>
<dbReference type="PROSITE" id="PS51363">
    <property type="entry name" value="W2"/>
    <property type="match status" value="1"/>
</dbReference>
<organism>
    <name type="scientific">Zea mays</name>
    <name type="common">Maize</name>
    <dbReference type="NCBI Taxonomy" id="4577"/>
    <lineage>
        <taxon>Eukaryota</taxon>
        <taxon>Viridiplantae</taxon>
        <taxon>Streptophyta</taxon>
        <taxon>Embryophyta</taxon>
        <taxon>Tracheophyta</taxon>
        <taxon>Spermatophyta</taxon>
        <taxon>Magnoliopsida</taxon>
        <taxon>Liliopsida</taxon>
        <taxon>Poales</taxon>
        <taxon>Poaceae</taxon>
        <taxon>PACMAD clade</taxon>
        <taxon>Panicoideae</taxon>
        <taxon>Andropogonodae</taxon>
        <taxon>Andropogoneae</taxon>
        <taxon>Tripsacinae</taxon>
        <taxon>Zea</taxon>
    </lineage>
</organism>
<name>IF5_MAIZE</name>
<gene>
    <name type="primary">EIF5</name>
</gene>
<comment type="function">
    <text>Catalyzes the hydrolysis of GTP bound to the 40S ribosomal initiation complex (40S.mRNA.Met-tRNA[F].eIF-2.GTP) with the subsequent joining of a 60S ribosomal subunit resulting in the release of eIF-2 and the guanine nucleotide. The subsequent joining of a 60S ribosomal subunit results in the formation of a functional 80S initiation complex (80S.mRNA.Met-tRNA[F]).</text>
</comment>
<comment type="similarity">
    <text evidence="4">Belongs to the eIF-2-beta/eIF-5 family.</text>
</comment>
<accession>P55876</accession>
<accession>Q9SBX1</accession>
<reference key="1">
    <citation type="journal article" date="1997" name="Biochem. Biophys. Res. Commun.">
        <title>The eukaryotic translation initiation factor-5, elF-5, a protein from Zea mays, containing a zinc-finger structure, binds nucleic acids in a zinc-dependent manner.</title>
        <authorList>
            <person name="Lopez Ribera I.R."/>
            <person name="Ruiz-Avila L."/>
            <person name="Puigdomenech P."/>
        </authorList>
    </citation>
    <scope>NUCLEOTIDE SEQUENCE [MRNA]</scope>
</reference>
<reference key="2">
    <citation type="journal article" date="1999" name="Gene">
        <title>Structure, organization and expression of the eukaryotic translation initiation factor 5, eIF-5, gene in Zea mays.</title>
        <authorList>
            <person name="Lopez Ribera I.R."/>
            <person name="Puigdomenech P."/>
        </authorList>
    </citation>
    <scope>NUCLEOTIDE SEQUENCE [GENOMIC DNA]</scope>
    <source>
        <strain>cv. B73</strain>
    </source>
</reference>
<evidence type="ECO:0000255" key="1"/>
<evidence type="ECO:0000255" key="2">
    <source>
        <dbReference type="PROSITE-ProRule" id="PRU00695"/>
    </source>
</evidence>
<evidence type="ECO:0000256" key="3">
    <source>
        <dbReference type="SAM" id="MobiDB-lite"/>
    </source>
</evidence>
<evidence type="ECO:0000305" key="4"/>